<accession>Q2RY62</accession>
<sequence length="399" mass="41841">MPLQAIVSFLRLDIAAGVILVGAAVLALIAANSPAAALYEQVFQTPFVIGYGPWLLEKPLLLWINDGLMAVFFLLVGLEIKREVRGGELSTPRLAALPAVAAVGGMVVPALIYASLTWGDAFALRGWAIPAATDIAFALGILTLLGPRVPISLKIFLTALAIIDDLGAILIIAFFYTASLSPLALLLAAACLALLIGLNLSGQRRLWPYLLIGVVLWVCVLKSGVHATLAGVVLALTIPLGATDDESASADKPLERLEHGLHPWVTYAILPLFAFANAGVSLAGLPPSALLAPVPLGIVLGLFLGKQIGVFGFSWLAIRSGLAPMPQGARWRDLYGVALITGVGFTMSLFIGTLAFETSDPLAADFGTEVRLGVLSGSLLSGVIGYLVLRLSRRNPATE</sequence>
<dbReference type="EMBL" id="CP000230">
    <property type="protein sequence ID" value="ABC20933.1"/>
    <property type="molecule type" value="Genomic_DNA"/>
</dbReference>
<dbReference type="RefSeq" id="WP_011387889.1">
    <property type="nucleotide sequence ID" value="NC_007643.1"/>
</dbReference>
<dbReference type="RefSeq" id="YP_425220.1">
    <property type="nucleotide sequence ID" value="NC_007643.1"/>
</dbReference>
<dbReference type="SMR" id="Q2RY62"/>
<dbReference type="STRING" id="269796.Rru_A0128"/>
<dbReference type="EnsemblBacteria" id="ABC20933">
    <property type="protein sequence ID" value="ABC20933"/>
    <property type="gene ID" value="Rru_A0128"/>
</dbReference>
<dbReference type="KEGG" id="rru:Rru_A0128"/>
<dbReference type="PATRIC" id="fig|269796.9.peg.183"/>
<dbReference type="eggNOG" id="COG3004">
    <property type="taxonomic scope" value="Bacteria"/>
</dbReference>
<dbReference type="HOGENOM" id="CLU_015803_1_0_5"/>
<dbReference type="PhylomeDB" id="Q2RY62"/>
<dbReference type="Proteomes" id="UP000001929">
    <property type="component" value="Chromosome"/>
</dbReference>
<dbReference type="GO" id="GO:0005886">
    <property type="term" value="C:plasma membrane"/>
    <property type="evidence" value="ECO:0007669"/>
    <property type="project" value="UniProtKB-SubCell"/>
</dbReference>
<dbReference type="GO" id="GO:0015385">
    <property type="term" value="F:sodium:proton antiporter activity"/>
    <property type="evidence" value="ECO:0007669"/>
    <property type="project" value="TreeGrafter"/>
</dbReference>
<dbReference type="GO" id="GO:0006885">
    <property type="term" value="P:regulation of pH"/>
    <property type="evidence" value="ECO:0007669"/>
    <property type="project" value="InterPro"/>
</dbReference>
<dbReference type="Gene3D" id="1.20.1530.10">
    <property type="entry name" value="Na+/H+ antiporter like domain"/>
    <property type="match status" value="1"/>
</dbReference>
<dbReference type="HAMAP" id="MF_01844">
    <property type="entry name" value="NhaA"/>
    <property type="match status" value="1"/>
</dbReference>
<dbReference type="InterPro" id="IPR023171">
    <property type="entry name" value="Na/H_antiporter_dom_sf"/>
</dbReference>
<dbReference type="InterPro" id="IPR004670">
    <property type="entry name" value="NhaA"/>
</dbReference>
<dbReference type="NCBIfam" id="TIGR00773">
    <property type="entry name" value="NhaA"/>
    <property type="match status" value="1"/>
</dbReference>
<dbReference type="NCBIfam" id="NF007111">
    <property type="entry name" value="PRK09560.1"/>
    <property type="match status" value="1"/>
</dbReference>
<dbReference type="NCBIfam" id="NF007112">
    <property type="entry name" value="PRK09561.1"/>
    <property type="match status" value="1"/>
</dbReference>
<dbReference type="PANTHER" id="PTHR30341:SF0">
    <property type="entry name" value="NA(+)_H(+) ANTIPORTER NHAA"/>
    <property type="match status" value="1"/>
</dbReference>
<dbReference type="PANTHER" id="PTHR30341">
    <property type="entry name" value="SODIUM ION/PROTON ANTIPORTER NHAA-RELATED"/>
    <property type="match status" value="1"/>
</dbReference>
<dbReference type="Pfam" id="PF06965">
    <property type="entry name" value="Na_H_antiport_1"/>
    <property type="match status" value="1"/>
</dbReference>
<keyword id="KW-0050">Antiport</keyword>
<keyword id="KW-0997">Cell inner membrane</keyword>
<keyword id="KW-1003">Cell membrane</keyword>
<keyword id="KW-0406">Ion transport</keyword>
<keyword id="KW-0472">Membrane</keyword>
<keyword id="KW-1185">Reference proteome</keyword>
<keyword id="KW-0915">Sodium</keyword>
<keyword id="KW-0739">Sodium transport</keyword>
<keyword id="KW-0812">Transmembrane</keyword>
<keyword id="KW-1133">Transmembrane helix</keyword>
<keyword id="KW-0813">Transport</keyword>
<organism>
    <name type="scientific">Rhodospirillum rubrum (strain ATCC 11170 / ATH 1.1.1 / DSM 467 / LMG 4362 / NCIMB 8255 / S1)</name>
    <dbReference type="NCBI Taxonomy" id="269796"/>
    <lineage>
        <taxon>Bacteria</taxon>
        <taxon>Pseudomonadati</taxon>
        <taxon>Pseudomonadota</taxon>
        <taxon>Alphaproteobacteria</taxon>
        <taxon>Rhodospirillales</taxon>
        <taxon>Rhodospirillaceae</taxon>
        <taxon>Rhodospirillum</taxon>
    </lineage>
</organism>
<proteinExistence type="inferred from homology"/>
<protein>
    <recommendedName>
        <fullName evidence="1">Na(+)/H(+) antiporter NhaA</fullName>
    </recommendedName>
    <alternativeName>
        <fullName evidence="1">Sodium/proton antiporter NhaA</fullName>
    </alternativeName>
</protein>
<gene>
    <name evidence="1" type="primary">nhaA</name>
    <name type="ordered locus">Rru_A0128</name>
</gene>
<evidence type="ECO:0000255" key="1">
    <source>
        <dbReference type="HAMAP-Rule" id="MF_01844"/>
    </source>
</evidence>
<comment type="function">
    <text evidence="1">Na(+)/H(+) antiporter that extrudes sodium in exchange for external protons.</text>
</comment>
<comment type="catalytic activity">
    <reaction evidence="1">
        <text>Na(+)(in) + 2 H(+)(out) = Na(+)(out) + 2 H(+)(in)</text>
        <dbReference type="Rhea" id="RHEA:29251"/>
        <dbReference type="ChEBI" id="CHEBI:15378"/>
        <dbReference type="ChEBI" id="CHEBI:29101"/>
    </reaction>
    <physiologicalReaction direction="left-to-right" evidence="1">
        <dbReference type="Rhea" id="RHEA:29252"/>
    </physiologicalReaction>
</comment>
<comment type="subcellular location">
    <subcellularLocation>
        <location evidence="1">Cell inner membrane</location>
        <topology evidence="1">Multi-pass membrane protein</topology>
    </subcellularLocation>
</comment>
<comment type="similarity">
    <text evidence="1">Belongs to the NhaA Na(+)/H(+) (TC 2.A.33) antiporter family.</text>
</comment>
<reference key="1">
    <citation type="journal article" date="2011" name="Stand. Genomic Sci.">
        <title>Complete genome sequence of Rhodospirillum rubrum type strain (S1).</title>
        <authorList>
            <person name="Munk A.C."/>
            <person name="Copeland A."/>
            <person name="Lucas S."/>
            <person name="Lapidus A."/>
            <person name="Del Rio T.G."/>
            <person name="Barry K."/>
            <person name="Detter J.C."/>
            <person name="Hammon N."/>
            <person name="Israni S."/>
            <person name="Pitluck S."/>
            <person name="Brettin T."/>
            <person name="Bruce D."/>
            <person name="Han C."/>
            <person name="Tapia R."/>
            <person name="Gilna P."/>
            <person name="Schmutz J."/>
            <person name="Larimer F."/>
            <person name="Land M."/>
            <person name="Kyrpides N.C."/>
            <person name="Mavromatis K."/>
            <person name="Richardson P."/>
            <person name="Rohde M."/>
            <person name="Goeker M."/>
            <person name="Klenk H.P."/>
            <person name="Zhang Y."/>
            <person name="Roberts G.P."/>
            <person name="Reslewic S."/>
            <person name="Schwartz D.C."/>
        </authorList>
    </citation>
    <scope>NUCLEOTIDE SEQUENCE [LARGE SCALE GENOMIC DNA]</scope>
    <source>
        <strain>ATCC 11170 / ATH 1.1.1 / DSM 467 / LMG 4362 / NCIMB 8255 / S1</strain>
    </source>
</reference>
<feature type="chain" id="PRO_0000334394" description="Na(+)/H(+) antiporter NhaA">
    <location>
        <begin position="1"/>
        <end position="399"/>
    </location>
</feature>
<feature type="transmembrane region" description="Helical" evidence="1">
    <location>
        <begin position="12"/>
        <end position="32"/>
    </location>
</feature>
<feature type="transmembrane region" description="Helical" evidence="1">
    <location>
        <begin position="60"/>
        <end position="80"/>
    </location>
</feature>
<feature type="transmembrane region" description="Helical" evidence="1">
    <location>
        <begin position="94"/>
        <end position="114"/>
    </location>
</feature>
<feature type="transmembrane region" description="Helical" evidence="1">
    <location>
        <begin position="126"/>
        <end position="146"/>
    </location>
</feature>
<feature type="transmembrane region" description="Helical" evidence="1">
    <location>
        <begin position="155"/>
        <end position="175"/>
    </location>
</feature>
<feature type="transmembrane region" description="Helical" evidence="1">
    <location>
        <begin position="178"/>
        <end position="198"/>
    </location>
</feature>
<feature type="transmembrane region" description="Helical" evidence="1">
    <location>
        <begin position="206"/>
        <end position="226"/>
    </location>
</feature>
<feature type="transmembrane region" description="Helical" evidence="1">
    <location>
        <begin position="263"/>
        <end position="283"/>
    </location>
</feature>
<feature type="transmembrane region" description="Helical" evidence="1">
    <location>
        <begin position="284"/>
        <end position="304"/>
    </location>
</feature>
<feature type="transmembrane region" description="Helical" evidence="1">
    <location>
        <begin position="336"/>
        <end position="356"/>
    </location>
</feature>
<feature type="transmembrane region" description="Helical" evidence="1">
    <location>
        <begin position="372"/>
        <end position="392"/>
    </location>
</feature>
<name>NHAA_RHORT</name>